<feature type="chain" id="PRO_0000195175" description="Galactosylgalactosylxylosylprotein 3-beta-glucuronosyltransferase 3">
    <location>
        <begin position="1"/>
        <end position="335"/>
    </location>
</feature>
<feature type="topological domain" description="Cytoplasmic" evidence="3">
    <location>
        <begin position="1"/>
        <end position="7"/>
    </location>
</feature>
<feature type="transmembrane region" description="Helical; Signal-anchor for type II membrane protein" evidence="3">
    <location>
        <begin position="8"/>
        <end position="28"/>
    </location>
</feature>
<feature type="topological domain" description="Lumenal" evidence="3">
    <location>
        <begin position="29"/>
        <end position="335"/>
    </location>
</feature>
<feature type="region of interest" description="Disordered" evidence="4">
    <location>
        <begin position="312"/>
        <end position="335"/>
    </location>
</feature>
<feature type="compositionally biased region" description="Basic and acidic residues" evidence="4">
    <location>
        <begin position="312"/>
        <end position="322"/>
    </location>
</feature>
<feature type="active site" description="Proton acceptor" evidence="1">
    <location>
        <position position="281"/>
    </location>
</feature>
<feature type="binding site" evidence="1">
    <location>
        <position position="196"/>
    </location>
    <ligand>
        <name>Mn(2+)</name>
        <dbReference type="ChEBI" id="CHEBI:29035"/>
    </ligand>
</feature>
<feature type="glycosylation site" description="N-linked (GlcNAc...) asparagine" evidence="3">
    <location>
        <position position="300"/>
    </location>
</feature>
<feature type="disulfide bond" description="Interchain" evidence="1">
    <location>
        <position position="33"/>
    </location>
</feature>
<keyword id="KW-1015">Disulfide bond</keyword>
<keyword id="KW-0325">Glycoprotein</keyword>
<keyword id="KW-0333">Golgi apparatus</keyword>
<keyword id="KW-0464">Manganese</keyword>
<keyword id="KW-0472">Membrane</keyword>
<keyword id="KW-0479">Metal-binding</keyword>
<keyword id="KW-0735">Signal-anchor</keyword>
<keyword id="KW-0808">Transferase</keyword>
<keyword id="KW-0812">Transmembrane</keyword>
<keyword id="KW-1133">Transmembrane helix</keyword>
<sequence length="335" mass="37095">MKLKLKNVFLAYFLVSIAGLLYALVQLGQPCDCLPPLRAAAEQLRQKDLRISQLQADLRRPPPVPAQPPEPEALPTIYVITPTYARLVQKAELVRLSQTLSLVPRLHWLLVEDAESPTPLVSGLLAASGLLFTHLAVLTPKAQRLREGEPGWVRPRGVEQRNKALDWLRGKGGAVGGEKDPPPPGTQGVVYFADDDNTYSRELFKEMRWTRGVSVWPVGLVGGLRFEGPRVQDGRVVGFHTAWEPNRPFPLDMAGFAVALPLLLAKPNAQFDATAPRGHLESSLLSHLVDPKDLEPRAANCTQVLVWHTRTEKPKMKQEEQLQRQGQGSDPAIEV</sequence>
<reference key="1">
    <citation type="journal article" date="1999" name="J. Biol. Chem.">
        <title>Formation of HNK-1 determinants and the glycosaminoglycan tetrasaccharide linkage region by UDP-GlcUA:Galactose beta1, 3-glucuronosyltransferases.</title>
        <authorList>
            <person name="Wei G."/>
            <person name="Bai X."/>
            <person name="Sarkar A.K."/>
            <person name="Esko J.D."/>
        </authorList>
    </citation>
    <scope>NUCLEOTIDE SEQUENCE [MRNA]</scope>
</reference>
<gene>
    <name type="primary">B3GAT3</name>
</gene>
<protein>
    <recommendedName>
        <fullName>Galactosylgalactosylxylosylprotein 3-beta-glucuronosyltransferase 3</fullName>
        <ecNumber evidence="2">2.4.1.135</ecNumber>
    </recommendedName>
    <alternativeName>
        <fullName>Beta-1,3-glucuronyltransferase 3</fullName>
    </alternativeName>
    <alternativeName>
        <fullName>Glucuronosyltransferase I</fullName>
        <shortName>GlcAT-I</shortName>
    </alternativeName>
    <alternativeName>
        <fullName>UDP-GlcUA:Gal beta-1,3-Gal-R glucuronyltransferase</fullName>
        <shortName>GlcUAT-I</shortName>
    </alternativeName>
</protein>
<evidence type="ECO:0000250" key="1"/>
<evidence type="ECO:0000250" key="2">
    <source>
        <dbReference type="UniProtKB" id="O94766"/>
    </source>
</evidence>
<evidence type="ECO:0000255" key="3"/>
<evidence type="ECO:0000256" key="4">
    <source>
        <dbReference type="SAM" id="MobiDB-lite"/>
    </source>
</evidence>
<evidence type="ECO:0000305" key="5"/>
<organism>
    <name type="scientific">Cricetulus griseus</name>
    <name type="common">Chinese hamster</name>
    <name type="synonym">Cricetulus barabensis griseus</name>
    <dbReference type="NCBI Taxonomy" id="10029"/>
    <lineage>
        <taxon>Eukaryota</taxon>
        <taxon>Metazoa</taxon>
        <taxon>Chordata</taxon>
        <taxon>Craniata</taxon>
        <taxon>Vertebrata</taxon>
        <taxon>Euteleostomi</taxon>
        <taxon>Mammalia</taxon>
        <taxon>Eutheria</taxon>
        <taxon>Euarchontoglires</taxon>
        <taxon>Glires</taxon>
        <taxon>Rodentia</taxon>
        <taxon>Myomorpha</taxon>
        <taxon>Muroidea</taxon>
        <taxon>Cricetidae</taxon>
        <taxon>Cricetinae</taxon>
        <taxon>Cricetulus</taxon>
    </lineage>
</organism>
<dbReference type="EC" id="2.4.1.135" evidence="2"/>
<dbReference type="EMBL" id="AF113703">
    <property type="protein sequence ID" value="AAD22007.1"/>
    <property type="molecule type" value="mRNA"/>
</dbReference>
<dbReference type="RefSeq" id="NP_001233613.1">
    <property type="nucleotide sequence ID" value="NM_001246684.1"/>
</dbReference>
<dbReference type="SMR" id="Q9WU47"/>
<dbReference type="CAZy" id="GT43">
    <property type="family name" value="Glycosyltransferase Family 43"/>
</dbReference>
<dbReference type="GlyCosmos" id="Q9WU47">
    <property type="glycosylation" value="1 site, No reported glycans"/>
</dbReference>
<dbReference type="PaxDb" id="10029-NP_001233613.1"/>
<dbReference type="Ensembl" id="ENSCGRT00001029899.1">
    <property type="protein sequence ID" value="ENSCGRP00001025653.1"/>
    <property type="gene ID" value="ENSCGRG00001023184.1"/>
</dbReference>
<dbReference type="GeneID" id="100689419"/>
<dbReference type="KEGG" id="cge:100689419"/>
<dbReference type="CTD" id="26229"/>
<dbReference type="eggNOG" id="KOG1476">
    <property type="taxonomic scope" value="Eukaryota"/>
</dbReference>
<dbReference type="GeneTree" id="ENSGT00940000156954"/>
<dbReference type="OrthoDB" id="675023at2759"/>
<dbReference type="BRENDA" id="2.4.1.135">
    <property type="organism ID" value="1309"/>
</dbReference>
<dbReference type="UniPathway" id="UPA00378"/>
<dbReference type="Proteomes" id="UP000694386">
    <property type="component" value="Unplaced"/>
</dbReference>
<dbReference type="Proteomes" id="UP001108280">
    <property type="component" value="Chromosome 3"/>
</dbReference>
<dbReference type="GO" id="GO:0005801">
    <property type="term" value="C:cis-Golgi network"/>
    <property type="evidence" value="ECO:0000250"/>
    <property type="project" value="UniProtKB"/>
</dbReference>
<dbReference type="GO" id="GO:0000139">
    <property type="term" value="C:Golgi membrane"/>
    <property type="evidence" value="ECO:0007669"/>
    <property type="project" value="UniProtKB-SubCell"/>
</dbReference>
<dbReference type="GO" id="GO:0015018">
    <property type="term" value="F:galactosylgalactosylxylosylprotein 3-beta-glucuronosyltransferase activity"/>
    <property type="evidence" value="ECO:0007669"/>
    <property type="project" value="UniProtKB-EC"/>
</dbReference>
<dbReference type="GO" id="GO:0015020">
    <property type="term" value="F:glucuronosyltransferase activity"/>
    <property type="evidence" value="ECO:0000250"/>
    <property type="project" value="UniProtKB"/>
</dbReference>
<dbReference type="GO" id="GO:0046872">
    <property type="term" value="F:metal ion binding"/>
    <property type="evidence" value="ECO:0007669"/>
    <property type="project" value="UniProtKB-KW"/>
</dbReference>
<dbReference type="GO" id="GO:0072542">
    <property type="term" value="F:protein phosphatase activator activity"/>
    <property type="evidence" value="ECO:0000250"/>
    <property type="project" value="UniProtKB"/>
</dbReference>
<dbReference type="GO" id="GO:0005975">
    <property type="term" value="P:carbohydrate metabolic process"/>
    <property type="evidence" value="ECO:0007669"/>
    <property type="project" value="TreeGrafter"/>
</dbReference>
<dbReference type="GO" id="GO:0050650">
    <property type="term" value="P:chondroitin sulfate proteoglycan biosynthetic process"/>
    <property type="evidence" value="ECO:0000250"/>
    <property type="project" value="UniProtKB"/>
</dbReference>
<dbReference type="GO" id="GO:0050651">
    <property type="term" value="P:dermatan sulfate proteoglycan biosynthetic process"/>
    <property type="evidence" value="ECO:0000250"/>
    <property type="project" value="UniProtKB"/>
</dbReference>
<dbReference type="GO" id="GO:0006024">
    <property type="term" value="P:glycosaminoglycan biosynthetic process"/>
    <property type="evidence" value="ECO:0000250"/>
    <property type="project" value="UniProtKB"/>
</dbReference>
<dbReference type="GO" id="GO:0015012">
    <property type="term" value="P:heparan sulfate proteoglycan biosynthetic process"/>
    <property type="evidence" value="ECO:0000250"/>
    <property type="project" value="UniProtKB"/>
</dbReference>
<dbReference type="GO" id="GO:0043085">
    <property type="term" value="P:positive regulation of catalytic activity"/>
    <property type="evidence" value="ECO:0000250"/>
    <property type="project" value="UniProtKB"/>
</dbReference>
<dbReference type="GO" id="GO:0090316">
    <property type="term" value="P:positive regulation of intracellular protein transport"/>
    <property type="evidence" value="ECO:0000250"/>
    <property type="project" value="UniProtKB"/>
</dbReference>
<dbReference type="GO" id="GO:0006486">
    <property type="term" value="P:protein glycosylation"/>
    <property type="evidence" value="ECO:0007669"/>
    <property type="project" value="UniProtKB-UniPathway"/>
</dbReference>
<dbReference type="CDD" id="cd00218">
    <property type="entry name" value="GlcAT-I"/>
    <property type="match status" value="1"/>
</dbReference>
<dbReference type="FunFam" id="3.90.550.10:FF:000044">
    <property type="entry name" value="Galactosylgalactosylxylosylprotein 3-beta-glucuronosyltransferase"/>
    <property type="match status" value="1"/>
</dbReference>
<dbReference type="Gene3D" id="3.90.550.10">
    <property type="entry name" value="Spore Coat Polysaccharide Biosynthesis Protein SpsA, Chain A"/>
    <property type="match status" value="1"/>
</dbReference>
<dbReference type="InterPro" id="IPR005027">
    <property type="entry name" value="Glyco_trans_43"/>
</dbReference>
<dbReference type="InterPro" id="IPR029044">
    <property type="entry name" value="Nucleotide-diphossugar_trans"/>
</dbReference>
<dbReference type="PANTHER" id="PTHR10896:SF65">
    <property type="entry name" value="GALACTOSYLGALACTOSYLXYLOSYLPROTEIN 3-BETA-GLUCURONOSYLTRANSFERASE 3"/>
    <property type="match status" value="1"/>
</dbReference>
<dbReference type="PANTHER" id="PTHR10896">
    <property type="entry name" value="GALACTOSYLGALACTOSYLXYLOSYLPROTEIN 3-BETA-GLUCURONOSYLTRANSFERASE BETA-1,3-GLUCURONYLTRANSFERASE"/>
    <property type="match status" value="1"/>
</dbReference>
<dbReference type="Pfam" id="PF03360">
    <property type="entry name" value="Glyco_transf_43"/>
    <property type="match status" value="1"/>
</dbReference>
<dbReference type="SUPFAM" id="SSF53448">
    <property type="entry name" value="Nucleotide-diphospho-sugar transferases"/>
    <property type="match status" value="1"/>
</dbReference>
<comment type="function">
    <text evidence="2">Glycosaminoglycans biosynthesis. Involved in forming the linkage tetrasaccharide present in heparan sulfate and chondroitin sulfate. Transfers a glucuronic acid moiety from the uridine diphosphate-glucuronic acid (UDP-GlcUA) to the common linkage region trisaccharide Gal-beta-1,3-Gal-beta-1,4-Xyl covalently bound to a Ser residue at the glycosaminylglycan attachment site of proteoglycans. Can also play a role in the biosynthesis of l2/HNK-1 carbohydrate epitope on glycoproteins. Highest activity seen with Gal-beta-1,3-Gal-beta-O-R (where R=naphthalenemethanol or benzyl alcohol). Stimulates 2-phosphoxylose phosphatase activity of PXYLP1 in presence of uridine diphosphate-glucuronic acid (UDP-GlcUA) during completion of linkage region formation.</text>
</comment>
<comment type="catalytic activity">
    <reaction evidence="2">
        <text>3-O-(beta-D-galactosyl-(1-&gt;3)-beta-D-galactosyl-(1-&gt;4)-beta-D-xylosyl)-L-seryl-[protein] + UDP-alpha-D-glucuronate = 3-O-(beta-D-GlcA-(1-&gt;3)-beta-D-Gal-(1-&gt;3)-beta-D-Gal-(1-&gt;4)-beta-D-Xyl)-L-seryl-[protein] + UDP + H(+)</text>
        <dbReference type="Rhea" id="RHEA:24168"/>
        <dbReference type="Rhea" id="RHEA-COMP:12571"/>
        <dbReference type="Rhea" id="RHEA-COMP:12573"/>
        <dbReference type="ChEBI" id="CHEBI:15378"/>
        <dbReference type="ChEBI" id="CHEBI:58052"/>
        <dbReference type="ChEBI" id="CHEBI:58223"/>
        <dbReference type="ChEBI" id="CHEBI:132090"/>
        <dbReference type="ChEBI" id="CHEBI:132093"/>
        <dbReference type="EC" id="2.4.1.135"/>
    </reaction>
</comment>
<comment type="cofactor">
    <cofactor>
        <name>Mn(2+)</name>
        <dbReference type="ChEBI" id="CHEBI:29035"/>
    </cofactor>
</comment>
<comment type="pathway">
    <text>Protein modification; protein glycosylation.</text>
</comment>
<comment type="subunit">
    <text evidence="2">Homodimer; disulfide-linked. Interacts with PXYLP1; the interaction increases the 2-phosphoxylose phosphatase activity of PXYLP1 during completion of linkage region formation in a B3GAT3-mediated manner.</text>
</comment>
<comment type="subcellular location">
    <subcellularLocation>
        <location evidence="2">Golgi apparatus membrane</location>
        <topology evidence="2">Single-pass type II membrane protein</topology>
    </subcellularLocation>
    <subcellularLocation>
        <location evidence="2">Golgi apparatus</location>
        <location evidence="2">cis-Golgi network</location>
    </subcellularLocation>
</comment>
<comment type="tissue specificity">
    <text>Liver, brain and heart. Moderate expression seen in lung, skeletal muscle, kidney and testis.</text>
</comment>
<comment type="PTM">
    <text evidence="1">N-glycosylated.</text>
</comment>
<comment type="similarity">
    <text evidence="5">Belongs to the glycosyltransferase 43 family.</text>
</comment>
<proteinExistence type="evidence at transcript level"/>
<name>B3GA3_CRIGR</name>
<accession>Q9WU47</accession>